<keyword id="KW-1003">Cell membrane</keyword>
<keyword id="KW-0407">Ion channel</keyword>
<keyword id="KW-0406">Ion transport</keyword>
<keyword id="KW-0472">Membrane</keyword>
<keyword id="KW-0630">Potassium</keyword>
<keyword id="KW-0631">Potassium channel</keyword>
<keyword id="KW-0633">Potassium transport</keyword>
<keyword id="KW-1185">Reference proteome</keyword>
<keyword id="KW-0812">Transmembrane</keyword>
<keyword id="KW-1133">Transmembrane helix</keyword>
<keyword id="KW-0813">Transport</keyword>
<keyword id="KW-0851">Voltage-gated channel</keyword>
<reference key="1">
    <citation type="journal article" date="2007" name="Genome Res.">
        <title>Comparative sequence analyses reveal rapid and divergent evolutionary changes of the WFDC locus in the primate lineage.</title>
        <authorList>
            <consortium name="NISC comparative sequencing program"/>
            <person name="Hurle B."/>
            <person name="Swanson W."/>
            <person name="Green E.D."/>
        </authorList>
    </citation>
    <scope>NUCLEOTIDE SEQUENCE [GENOMIC DNA]</scope>
</reference>
<comment type="function">
    <text evidence="1 3">Potassium channel regulatory subunit that modulate the delayed rectifier voltage-gated potassium channel activity of KCNB1 and KCNB2 by altering their kinetics, expression levels, and shifting the half-inactivation potential to more polarized values. While it does not form functional channels on its own, it can form functional heterotetrameric channels with KCNB1 and KCNB2 (By similarity). Each regulatory subunit has unique regulatory properties that can lead to extensive inhibition, significant changes in kinetics, and/or substantial shifts in the voltage dependencies of the inactivation process (By similarity).</text>
</comment>
<comment type="subunit">
    <text evidence="1 3">Heterotetramer with KCNB1 (By similarity). Heterotetramer with KCNB2 (By similarity). Does not form homomultimers (By similarity).</text>
</comment>
<comment type="subcellular location">
    <subcellularLocation>
        <location evidence="3">Cell membrane</location>
        <topology evidence="3">Multi-pass membrane protein</topology>
    </subcellularLocation>
    <text evidence="3">May not reach the plasma membrane but remain in an intracellular compartment in the absence of KCNB1 or KCNB2.</text>
</comment>
<comment type="domain">
    <text evidence="2">The transmembrane segment S4 functions as a voltage-sensor and is characterized by a series of positively charged amino acids at every third position. Channel opening and closing is effected by a conformation change that affects the position and orientation of the voltage-sensor paddle formed by S3 and S4 within the membrane. A transmembrane electric field that is positive inside would push the positively charged S4 segment outwards, thereby opening the pore, while a field that is negative inside would pull the S4 segment inwards and close the pore. Changes in the position and orientation of S4 are then transmitted to the activation gate formed by the inner helix bundle via the S4-S5 linker region.</text>
</comment>
<comment type="similarity">
    <text evidence="5">Belongs to the potassium channel family. S (TC 1.A.1.2) subfamily. Kv9.1/KCNS1 sub-subfamily.</text>
</comment>
<evidence type="ECO:0000250" key="1">
    <source>
        <dbReference type="UniProtKB" id="O35173"/>
    </source>
</evidence>
<evidence type="ECO:0000250" key="2">
    <source>
        <dbReference type="UniProtKB" id="P63142"/>
    </source>
</evidence>
<evidence type="ECO:0000250" key="3">
    <source>
        <dbReference type="UniProtKB" id="Q96KK3"/>
    </source>
</evidence>
<evidence type="ECO:0000256" key="4">
    <source>
        <dbReference type="SAM" id="MobiDB-lite"/>
    </source>
</evidence>
<evidence type="ECO:0000305" key="5"/>
<sequence length="529" mass="58519">MLMLLVRGTRYENHRPKVTLPTPLGGRSNEATVCESPSPDTGIRWRRSDEALRVNVGGVRRLLSARALARFPGTRLGRLQAAASEEQARRLCDDYDAAAREFYFDRHPGFFLGLLHFYRTGHLHVLDELCVFAFGQEADYWGLGENALAACCRARYLERRVTRPRAWDEDSDTPSSVDPCPDEISDVQRELARYGAARCGRLRRRLWLTMENPGYSLPSKLFSCVSISVVLASIAAMCIHSLPEYQAREAAAAVAAVAAGRSAEGVRDDPVLRRLEYFCIAWFSFEVSSRLLLAPSTRNFFCHPLNLIDIVSVLPFYLTLLAGAALGDHGGTGGKEFGHLGKVVQVFRLMRIFRVLKLARHSTGLRSLGATLKHSYREVGILLLYLAVGVSVFSGVAYTAEKEEHVGFDTIPACWWWGTVSMTTVGYGDVVPVTVAGKLAASGCILGGILVVALPITIIFNKFSHFYRRQKALEAAVRNSNHQEFEDLLSSVDGVSEASLETSRETSQEGRSADLETQVPSEPPHSQMY</sequence>
<gene>
    <name evidence="3" type="primary">KCNS1</name>
</gene>
<dbReference type="EMBL" id="DP000046">
    <property type="protein sequence ID" value="ABO53001.1"/>
    <property type="molecule type" value="Genomic_DNA"/>
</dbReference>
<dbReference type="RefSeq" id="XP_012322688.1">
    <property type="nucleotide sequence ID" value="XM_012467265.3"/>
</dbReference>
<dbReference type="RefSeq" id="XP_012322689.1">
    <property type="nucleotide sequence ID" value="XM_012467266.1"/>
</dbReference>
<dbReference type="SMR" id="A4K2W6"/>
<dbReference type="STRING" id="37293.ENSANAP00000039703"/>
<dbReference type="Ensembl" id="ENSANAT00000057804.1">
    <property type="protein sequence ID" value="ENSANAP00000039703.1"/>
    <property type="gene ID" value="ENSANAG00000037226.1"/>
</dbReference>
<dbReference type="GeneID" id="105727444"/>
<dbReference type="KEGG" id="anan:105727444"/>
<dbReference type="CTD" id="3787"/>
<dbReference type="GeneTree" id="ENSGT00940000160096"/>
<dbReference type="OMA" id="CSGRYHE"/>
<dbReference type="OrthoDB" id="296522at2759"/>
<dbReference type="Proteomes" id="UP000233020">
    <property type="component" value="Unplaced"/>
</dbReference>
<dbReference type="GO" id="GO:0005654">
    <property type="term" value="C:nucleoplasm"/>
    <property type="evidence" value="ECO:0007669"/>
    <property type="project" value="Ensembl"/>
</dbReference>
<dbReference type="GO" id="GO:0048471">
    <property type="term" value="C:perinuclear region of cytoplasm"/>
    <property type="evidence" value="ECO:0000250"/>
    <property type="project" value="UniProtKB"/>
</dbReference>
<dbReference type="GO" id="GO:0005886">
    <property type="term" value="C:plasma membrane"/>
    <property type="evidence" value="ECO:0000250"/>
    <property type="project" value="UniProtKB"/>
</dbReference>
<dbReference type="GO" id="GO:0008076">
    <property type="term" value="C:voltage-gated potassium channel complex"/>
    <property type="evidence" value="ECO:0000250"/>
    <property type="project" value="UniProtKB"/>
</dbReference>
<dbReference type="GO" id="GO:0005251">
    <property type="term" value="F:delayed rectifier potassium channel activity"/>
    <property type="evidence" value="ECO:0007669"/>
    <property type="project" value="TreeGrafter"/>
</dbReference>
<dbReference type="GO" id="GO:0015459">
    <property type="term" value="F:potassium channel regulator activity"/>
    <property type="evidence" value="ECO:0000250"/>
    <property type="project" value="UniProtKB"/>
</dbReference>
<dbReference type="GO" id="GO:0001508">
    <property type="term" value="P:action potential"/>
    <property type="evidence" value="ECO:0007669"/>
    <property type="project" value="TreeGrafter"/>
</dbReference>
<dbReference type="GO" id="GO:0006813">
    <property type="term" value="P:potassium ion transport"/>
    <property type="evidence" value="ECO:0000250"/>
    <property type="project" value="UniProtKB"/>
</dbReference>
<dbReference type="GO" id="GO:0051260">
    <property type="term" value="P:protein homooligomerization"/>
    <property type="evidence" value="ECO:0007669"/>
    <property type="project" value="InterPro"/>
</dbReference>
<dbReference type="GO" id="GO:1901379">
    <property type="term" value="P:regulation of potassium ion transmembrane transport"/>
    <property type="evidence" value="ECO:0000250"/>
    <property type="project" value="UniProtKB"/>
</dbReference>
<dbReference type="FunFam" id="1.10.287.70:FF:000005">
    <property type="entry name" value="potassium voltage-gated channel subfamily G member 1"/>
    <property type="match status" value="1"/>
</dbReference>
<dbReference type="FunFam" id="3.30.710.10:FF:000102">
    <property type="entry name" value="Potassium voltage-gated channel subfamily S member 1"/>
    <property type="match status" value="1"/>
</dbReference>
<dbReference type="FunFam" id="1.20.120.350:FF:000029">
    <property type="entry name" value="Potassium voltage-gated channel subfamily S member 2"/>
    <property type="match status" value="1"/>
</dbReference>
<dbReference type="Gene3D" id="1.10.287.70">
    <property type="match status" value="1"/>
</dbReference>
<dbReference type="Gene3D" id="3.30.710.10">
    <property type="entry name" value="Potassium Channel Kv1.1, Chain A"/>
    <property type="match status" value="1"/>
</dbReference>
<dbReference type="Gene3D" id="1.20.120.350">
    <property type="entry name" value="Voltage-gated potassium channels. Chain C"/>
    <property type="match status" value="1"/>
</dbReference>
<dbReference type="InterPro" id="IPR000210">
    <property type="entry name" value="BTB/POZ_dom"/>
</dbReference>
<dbReference type="InterPro" id="IPR005821">
    <property type="entry name" value="Ion_trans_dom"/>
</dbReference>
<dbReference type="InterPro" id="IPR003968">
    <property type="entry name" value="K_chnl_volt-dep_Kv"/>
</dbReference>
<dbReference type="InterPro" id="IPR003971">
    <property type="entry name" value="K_chnl_volt-dep_Kv5/Kv9"/>
</dbReference>
<dbReference type="InterPro" id="IPR011333">
    <property type="entry name" value="SKP1/BTB/POZ_sf"/>
</dbReference>
<dbReference type="InterPro" id="IPR003131">
    <property type="entry name" value="T1-type_BTB"/>
</dbReference>
<dbReference type="InterPro" id="IPR028325">
    <property type="entry name" value="VG_K_chnl"/>
</dbReference>
<dbReference type="InterPro" id="IPR027359">
    <property type="entry name" value="Volt_channel_dom_sf"/>
</dbReference>
<dbReference type="PANTHER" id="PTHR11537:SF61">
    <property type="entry name" value="POTASSIUM VOLTAGE-GATED CHANNEL SUBFAMILY S MEMBER 1"/>
    <property type="match status" value="1"/>
</dbReference>
<dbReference type="PANTHER" id="PTHR11537">
    <property type="entry name" value="VOLTAGE-GATED POTASSIUM CHANNEL"/>
    <property type="match status" value="1"/>
</dbReference>
<dbReference type="Pfam" id="PF02214">
    <property type="entry name" value="BTB_2"/>
    <property type="match status" value="1"/>
</dbReference>
<dbReference type="Pfam" id="PF00520">
    <property type="entry name" value="Ion_trans"/>
    <property type="match status" value="1"/>
</dbReference>
<dbReference type="PRINTS" id="PR00169">
    <property type="entry name" value="KCHANNEL"/>
</dbReference>
<dbReference type="PRINTS" id="PR01494">
    <property type="entry name" value="KV9CHANNEL"/>
</dbReference>
<dbReference type="PRINTS" id="PR01491">
    <property type="entry name" value="KVCHANNEL"/>
</dbReference>
<dbReference type="SMART" id="SM00225">
    <property type="entry name" value="BTB"/>
    <property type="match status" value="1"/>
</dbReference>
<dbReference type="SUPFAM" id="SSF54695">
    <property type="entry name" value="POZ domain"/>
    <property type="match status" value="1"/>
</dbReference>
<dbReference type="SUPFAM" id="SSF81324">
    <property type="entry name" value="Voltage-gated potassium channels"/>
    <property type="match status" value="1"/>
</dbReference>
<proteinExistence type="inferred from homology"/>
<feature type="chain" id="PRO_0000289613" description="Delayed-rectifier potassium channel regulatory subunit KCNS1">
    <location>
        <begin position="1"/>
        <end position="529"/>
    </location>
</feature>
<feature type="topological domain" description="Cytoplasmic" evidence="2">
    <location>
        <begin position="1"/>
        <end position="217"/>
    </location>
</feature>
<feature type="transmembrane region" description="Helical; Name=Segment S1" evidence="2">
    <location>
        <begin position="218"/>
        <end position="239"/>
    </location>
</feature>
<feature type="topological domain" description="Extracellular" evidence="2">
    <location>
        <begin position="240"/>
        <end position="270"/>
    </location>
</feature>
<feature type="transmembrane region" description="Helical; Name=Segment S2" evidence="2">
    <location>
        <begin position="271"/>
        <end position="293"/>
    </location>
</feature>
<feature type="topological domain" description="Cytoplasmic" evidence="2">
    <location>
        <begin position="294"/>
        <end position="304"/>
    </location>
</feature>
<feature type="transmembrane region" description="Helical; Name=Segment S3" evidence="2">
    <location>
        <begin position="305"/>
        <end position="322"/>
    </location>
</feature>
<feature type="topological domain" description="Extracellular" evidence="2">
    <location>
        <begin position="323"/>
        <end position="340"/>
    </location>
</feature>
<feature type="transmembrane region" description="Helical; Voltage-sensor; Name=Segment S4" evidence="2">
    <location>
        <begin position="341"/>
        <end position="361"/>
    </location>
</feature>
<feature type="topological domain" description="Cytoplasmic" evidence="2">
    <location>
        <begin position="362"/>
        <end position="376"/>
    </location>
</feature>
<feature type="transmembrane region" description="Helical; Name=Segment S5" evidence="2">
    <location>
        <begin position="377"/>
        <end position="398"/>
    </location>
</feature>
<feature type="topological domain" description="Extracellular" evidence="2">
    <location>
        <begin position="399"/>
        <end position="411"/>
    </location>
</feature>
<feature type="intramembrane region" description="Helical; Name=Pore helix" evidence="2">
    <location>
        <begin position="412"/>
        <end position="423"/>
    </location>
</feature>
<feature type="intramembrane region" evidence="2">
    <location>
        <begin position="424"/>
        <end position="431"/>
    </location>
</feature>
<feature type="topological domain" description="Extracellular" evidence="2">
    <location>
        <begin position="432"/>
        <end position="438"/>
    </location>
</feature>
<feature type="transmembrane region" description="Helical; Name=Segment S6" evidence="2">
    <location>
        <begin position="439"/>
        <end position="467"/>
    </location>
</feature>
<feature type="topological domain" description="Cytoplasmic" evidence="2">
    <location>
        <begin position="468"/>
        <end position="529"/>
    </location>
</feature>
<feature type="region of interest" description="Disordered" evidence="4">
    <location>
        <begin position="494"/>
        <end position="529"/>
    </location>
</feature>
<feature type="short sequence motif" description="Selectivity filter" evidence="2">
    <location>
        <begin position="424"/>
        <end position="429"/>
    </location>
</feature>
<feature type="compositionally biased region" description="Basic and acidic residues" evidence="4">
    <location>
        <begin position="502"/>
        <end position="514"/>
    </location>
</feature>
<name>KCNS1_AOTNA</name>
<protein>
    <recommendedName>
        <fullName evidence="3">Delayed-rectifier potassium channel regulatory subunit KCNS1</fullName>
    </recommendedName>
    <alternativeName>
        <fullName>Delayed-rectifier K(+) channel alpha subunit 1</fullName>
    </alternativeName>
    <alternativeName>
        <fullName evidence="3">Delayed-rectifier potassium channel subunit Kv9.1</fullName>
    </alternativeName>
</protein>
<organism>
    <name type="scientific">Aotus nancymaae</name>
    <name type="common">Ma's night monkey</name>
    <dbReference type="NCBI Taxonomy" id="37293"/>
    <lineage>
        <taxon>Eukaryota</taxon>
        <taxon>Metazoa</taxon>
        <taxon>Chordata</taxon>
        <taxon>Craniata</taxon>
        <taxon>Vertebrata</taxon>
        <taxon>Euteleostomi</taxon>
        <taxon>Mammalia</taxon>
        <taxon>Eutheria</taxon>
        <taxon>Euarchontoglires</taxon>
        <taxon>Primates</taxon>
        <taxon>Haplorrhini</taxon>
        <taxon>Platyrrhini</taxon>
        <taxon>Aotidae</taxon>
        <taxon>Aotus</taxon>
    </lineage>
</organism>
<accession>A4K2W6</accession>